<evidence type="ECO:0000255" key="1">
    <source>
        <dbReference type="HAMAP-Rule" id="MF_00163"/>
    </source>
</evidence>
<keyword id="KW-0378">Hydrolase</keyword>
<keyword id="KW-0408">Iron</keyword>
<keyword id="KW-0479">Metal-binding</keyword>
<keyword id="KW-0648">Protein biosynthesis</keyword>
<keyword id="KW-1185">Reference proteome</keyword>
<organism>
    <name type="scientific">Streptococcus pneumoniae serotype 2 (strain D39 / NCTC 7466)</name>
    <dbReference type="NCBI Taxonomy" id="373153"/>
    <lineage>
        <taxon>Bacteria</taxon>
        <taxon>Bacillati</taxon>
        <taxon>Bacillota</taxon>
        <taxon>Bacilli</taxon>
        <taxon>Lactobacillales</taxon>
        <taxon>Streptococcaceae</taxon>
        <taxon>Streptococcus</taxon>
    </lineage>
</organism>
<dbReference type="EC" id="3.5.1.88" evidence="1"/>
<dbReference type="EMBL" id="CP000410">
    <property type="protein sequence ID" value="ABJ54406.1"/>
    <property type="molecule type" value="Genomic_DNA"/>
</dbReference>
<dbReference type="RefSeq" id="WP_001272961.1">
    <property type="nucleotide sequence ID" value="NZ_JAMLJR010000005.1"/>
</dbReference>
<dbReference type="SMR" id="Q04JP7"/>
<dbReference type="PaxDb" id="373153-SPD_1285"/>
<dbReference type="GeneID" id="45218269"/>
<dbReference type="KEGG" id="spd:SPD_1285"/>
<dbReference type="eggNOG" id="COG0242">
    <property type="taxonomic scope" value="Bacteria"/>
</dbReference>
<dbReference type="HOGENOM" id="CLU_061901_4_0_9"/>
<dbReference type="BioCyc" id="SPNE373153:G1G6V-1388-MONOMER"/>
<dbReference type="Proteomes" id="UP000001452">
    <property type="component" value="Chromosome"/>
</dbReference>
<dbReference type="GO" id="GO:0046872">
    <property type="term" value="F:metal ion binding"/>
    <property type="evidence" value="ECO:0007669"/>
    <property type="project" value="UniProtKB-KW"/>
</dbReference>
<dbReference type="GO" id="GO:0042586">
    <property type="term" value="F:peptide deformylase activity"/>
    <property type="evidence" value="ECO:0007669"/>
    <property type="project" value="UniProtKB-UniRule"/>
</dbReference>
<dbReference type="GO" id="GO:0043686">
    <property type="term" value="P:co-translational protein modification"/>
    <property type="evidence" value="ECO:0007669"/>
    <property type="project" value="TreeGrafter"/>
</dbReference>
<dbReference type="GO" id="GO:0006412">
    <property type="term" value="P:translation"/>
    <property type="evidence" value="ECO:0007669"/>
    <property type="project" value="UniProtKB-UniRule"/>
</dbReference>
<dbReference type="CDD" id="cd00487">
    <property type="entry name" value="Pep_deformylase"/>
    <property type="match status" value="1"/>
</dbReference>
<dbReference type="FunFam" id="3.90.45.10:FF:000002">
    <property type="entry name" value="Peptide deformylase"/>
    <property type="match status" value="1"/>
</dbReference>
<dbReference type="Gene3D" id="3.90.45.10">
    <property type="entry name" value="Peptide deformylase"/>
    <property type="match status" value="1"/>
</dbReference>
<dbReference type="HAMAP" id="MF_00163">
    <property type="entry name" value="Pep_deformylase"/>
    <property type="match status" value="1"/>
</dbReference>
<dbReference type="InterPro" id="IPR023635">
    <property type="entry name" value="Peptide_deformylase"/>
</dbReference>
<dbReference type="InterPro" id="IPR036821">
    <property type="entry name" value="Peptide_deformylase_sf"/>
</dbReference>
<dbReference type="NCBIfam" id="TIGR00079">
    <property type="entry name" value="pept_deformyl"/>
    <property type="match status" value="1"/>
</dbReference>
<dbReference type="PANTHER" id="PTHR10458">
    <property type="entry name" value="PEPTIDE DEFORMYLASE"/>
    <property type="match status" value="1"/>
</dbReference>
<dbReference type="PANTHER" id="PTHR10458:SF8">
    <property type="entry name" value="PEPTIDE DEFORMYLASE 2"/>
    <property type="match status" value="1"/>
</dbReference>
<dbReference type="Pfam" id="PF01327">
    <property type="entry name" value="Pep_deformylase"/>
    <property type="match status" value="1"/>
</dbReference>
<dbReference type="PIRSF" id="PIRSF004749">
    <property type="entry name" value="Pep_def"/>
    <property type="match status" value="1"/>
</dbReference>
<dbReference type="PRINTS" id="PR01576">
    <property type="entry name" value="PDEFORMYLASE"/>
</dbReference>
<dbReference type="SUPFAM" id="SSF56420">
    <property type="entry name" value="Peptide deformylase"/>
    <property type="match status" value="1"/>
</dbReference>
<protein>
    <recommendedName>
        <fullName evidence="1">Peptide deformylase</fullName>
        <shortName evidence="1">PDF</shortName>
        <ecNumber evidence="1">3.5.1.88</ecNumber>
    </recommendedName>
    <alternativeName>
        <fullName evidence="1">Polypeptide deformylase</fullName>
    </alternativeName>
</protein>
<accession>Q04JP7</accession>
<reference key="1">
    <citation type="journal article" date="2007" name="J. Bacteriol.">
        <title>Genome sequence of Avery's virulent serotype 2 strain D39 of Streptococcus pneumoniae and comparison with that of unencapsulated laboratory strain R6.</title>
        <authorList>
            <person name="Lanie J.A."/>
            <person name="Ng W.-L."/>
            <person name="Kazmierczak K.M."/>
            <person name="Andrzejewski T.M."/>
            <person name="Davidsen T.M."/>
            <person name="Wayne K.J."/>
            <person name="Tettelin H."/>
            <person name="Glass J.I."/>
            <person name="Winkler M.E."/>
        </authorList>
    </citation>
    <scope>NUCLEOTIDE SEQUENCE [LARGE SCALE GENOMIC DNA]</scope>
    <source>
        <strain>D39 / NCTC 7466</strain>
    </source>
</reference>
<comment type="function">
    <text evidence="1">Removes the formyl group from the N-terminal Met of newly synthesized proteins. Requires at least a dipeptide for an efficient rate of reaction. N-terminal L-methionine is a prerequisite for activity but the enzyme has broad specificity at other positions.</text>
</comment>
<comment type="catalytic activity">
    <reaction evidence="1">
        <text>N-terminal N-formyl-L-methionyl-[peptide] + H2O = N-terminal L-methionyl-[peptide] + formate</text>
        <dbReference type="Rhea" id="RHEA:24420"/>
        <dbReference type="Rhea" id="RHEA-COMP:10639"/>
        <dbReference type="Rhea" id="RHEA-COMP:10640"/>
        <dbReference type="ChEBI" id="CHEBI:15377"/>
        <dbReference type="ChEBI" id="CHEBI:15740"/>
        <dbReference type="ChEBI" id="CHEBI:49298"/>
        <dbReference type="ChEBI" id="CHEBI:64731"/>
        <dbReference type="EC" id="3.5.1.88"/>
    </reaction>
</comment>
<comment type="cofactor">
    <cofactor evidence="1">
        <name>Fe(2+)</name>
        <dbReference type="ChEBI" id="CHEBI:29033"/>
    </cofactor>
    <text evidence="1">Binds 1 Fe(2+) ion.</text>
</comment>
<comment type="similarity">
    <text evidence="1">Belongs to the polypeptide deformylase family.</text>
</comment>
<name>DEF_STRP2</name>
<proteinExistence type="inferred from homology"/>
<feature type="chain" id="PRO_0000301102" description="Peptide deformylase">
    <location>
        <begin position="1"/>
        <end position="203"/>
    </location>
</feature>
<feature type="active site" evidence="1">
    <location>
        <position position="174"/>
    </location>
</feature>
<feature type="binding site" evidence="1">
    <location>
        <position position="130"/>
    </location>
    <ligand>
        <name>Fe cation</name>
        <dbReference type="ChEBI" id="CHEBI:24875"/>
    </ligand>
</feature>
<feature type="binding site" evidence="1">
    <location>
        <position position="173"/>
    </location>
    <ligand>
        <name>Fe cation</name>
        <dbReference type="ChEBI" id="CHEBI:24875"/>
    </ligand>
</feature>
<feature type="binding site" evidence="1">
    <location>
        <position position="177"/>
    </location>
    <ligand>
        <name>Fe cation</name>
        <dbReference type="ChEBI" id="CHEBI:24875"/>
    </ligand>
</feature>
<sequence length="203" mass="22692">MSAIERITKAAHLIDMNDIIREGNPTLRTVAEEVTFPLSDQEIILGEKMMQFLKHSQDPVMAEKMGLRGGVGLAAPQLDISKRIIAVLVPNIVEEGETPQEAYDLEAIMYNPKIVSHSVQDAALGEGEGCLSVDRNVPGYVVRHARVTVDYFDKDGEKHRIKLKGYNSIVVQHEIDHINGIMFYDRINEKDPFAVKDGLLILE</sequence>
<gene>
    <name evidence="1" type="primary">def</name>
    <name type="ordered locus">SPD_1285</name>
</gene>